<comment type="function">
    <text evidence="1">Carrier of the growing fatty acid chain in fatty acid biosynthesis.</text>
</comment>
<comment type="pathway">
    <text evidence="1">Lipid metabolism; fatty acid biosynthesis.</text>
</comment>
<comment type="subcellular location">
    <subcellularLocation>
        <location evidence="1">Cytoplasm</location>
    </subcellularLocation>
</comment>
<comment type="PTM">
    <text evidence="1">4'-phosphopantetheine is transferred from CoA to a specific serine of apo-ACP by AcpS. This modification is essential for activity because fatty acids are bound in thioester linkage to the sulfhydryl of the prosthetic group.</text>
</comment>
<comment type="similarity">
    <text evidence="1">Belongs to the acyl carrier protein (ACP) family.</text>
</comment>
<protein>
    <recommendedName>
        <fullName evidence="1">Acyl carrier protein</fullName>
        <shortName evidence="1">ACP</shortName>
    </recommendedName>
</protein>
<gene>
    <name evidence="1" type="primary">acpP</name>
    <name type="ordered locus">TPASS_0808</name>
</gene>
<evidence type="ECO:0000255" key="1">
    <source>
        <dbReference type="HAMAP-Rule" id="MF_01217"/>
    </source>
</evidence>
<evidence type="ECO:0000255" key="2">
    <source>
        <dbReference type="PROSITE-ProRule" id="PRU00258"/>
    </source>
</evidence>
<accession>B2S447</accession>
<sequence length="78" mass="8899">MDELFLRMRALVAEKLEVEEASITLDSSFRGDLGADSLDTYELVYAIEEEMGITIPDEKANEFETVRDAYEFIKSKVT</sequence>
<reference key="1">
    <citation type="journal article" date="2008" name="BMC Microbiol.">
        <title>Complete genome sequence of Treponema pallidum ssp. pallidum strain SS14 determined with oligonucleotide arrays.</title>
        <authorList>
            <person name="Matejkova P."/>
            <person name="Strouhal M."/>
            <person name="Smajs D."/>
            <person name="Norris S.J."/>
            <person name="Palzkill T."/>
            <person name="Petrosino J.F."/>
            <person name="Sodergren E."/>
            <person name="Norton J.E."/>
            <person name="Singh J."/>
            <person name="Richmond T.A."/>
            <person name="Molla M.N."/>
            <person name="Albert T.J."/>
            <person name="Weinstock G.M."/>
        </authorList>
    </citation>
    <scope>NUCLEOTIDE SEQUENCE [LARGE SCALE GENOMIC DNA]</scope>
    <source>
        <strain>SS14</strain>
    </source>
</reference>
<organism>
    <name type="scientific">Treponema pallidum subsp. pallidum (strain SS14)</name>
    <dbReference type="NCBI Taxonomy" id="455434"/>
    <lineage>
        <taxon>Bacteria</taxon>
        <taxon>Pseudomonadati</taxon>
        <taxon>Spirochaetota</taxon>
        <taxon>Spirochaetia</taxon>
        <taxon>Spirochaetales</taxon>
        <taxon>Treponemataceae</taxon>
        <taxon>Treponema</taxon>
    </lineage>
</organism>
<dbReference type="EMBL" id="CP000805">
    <property type="protein sequence ID" value="ACD71226.1"/>
    <property type="molecule type" value="Genomic_DNA"/>
</dbReference>
<dbReference type="RefSeq" id="WP_010882253.1">
    <property type="nucleotide sequence ID" value="NC_021508.1"/>
</dbReference>
<dbReference type="SMR" id="B2S447"/>
<dbReference type="GeneID" id="93876569"/>
<dbReference type="KEGG" id="tpp:TPASS_0808"/>
<dbReference type="PATRIC" id="fig|455434.6.peg.796"/>
<dbReference type="UniPathway" id="UPA00094"/>
<dbReference type="Proteomes" id="UP000001202">
    <property type="component" value="Chromosome"/>
</dbReference>
<dbReference type="GO" id="GO:0005829">
    <property type="term" value="C:cytosol"/>
    <property type="evidence" value="ECO:0007669"/>
    <property type="project" value="TreeGrafter"/>
</dbReference>
<dbReference type="GO" id="GO:0016020">
    <property type="term" value="C:membrane"/>
    <property type="evidence" value="ECO:0007669"/>
    <property type="project" value="GOC"/>
</dbReference>
<dbReference type="GO" id="GO:0000035">
    <property type="term" value="F:acyl binding"/>
    <property type="evidence" value="ECO:0007669"/>
    <property type="project" value="TreeGrafter"/>
</dbReference>
<dbReference type="GO" id="GO:0000036">
    <property type="term" value="F:acyl carrier activity"/>
    <property type="evidence" value="ECO:0007669"/>
    <property type="project" value="UniProtKB-UniRule"/>
</dbReference>
<dbReference type="GO" id="GO:0009245">
    <property type="term" value="P:lipid A biosynthetic process"/>
    <property type="evidence" value="ECO:0007669"/>
    <property type="project" value="TreeGrafter"/>
</dbReference>
<dbReference type="Gene3D" id="1.10.1200.10">
    <property type="entry name" value="ACP-like"/>
    <property type="match status" value="1"/>
</dbReference>
<dbReference type="HAMAP" id="MF_01217">
    <property type="entry name" value="Acyl_carrier"/>
    <property type="match status" value="1"/>
</dbReference>
<dbReference type="InterPro" id="IPR003231">
    <property type="entry name" value="ACP"/>
</dbReference>
<dbReference type="InterPro" id="IPR036736">
    <property type="entry name" value="ACP-like_sf"/>
</dbReference>
<dbReference type="InterPro" id="IPR009081">
    <property type="entry name" value="PP-bd_ACP"/>
</dbReference>
<dbReference type="NCBIfam" id="TIGR00517">
    <property type="entry name" value="acyl_carrier"/>
    <property type="match status" value="1"/>
</dbReference>
<dbReference type="NCBIfam" id="NF002148">
    <property type="entry name" value="PRK00982.1-2"/>
    <property type="match status" value="1"/>
</dbReference>
<dbReference type="NCBIfam" id="NF002150">
    <property type="entry name" value="PRK00982.1-4"/>
    <property type="match status" value="1"/>
</dbReference>
<dbReference type="PANTHER" id="PTHR20863">
    <property type="entry name" value="ACYL CARRIER PROTEIN"/>
    <property type="match status" value="1"/>
</dbReference>
<dbReference type="PANTHER" id="PTHR20863:SF76">
    <property type="entry name" value="CARRIER DOMAIN-CONTAINING PROTEIN"/>
    <property type="match status" value="1"/>
</dbReference>
<dbReference type="Pfam" id="PF00550">
    <property type="entry name" value="PP-binding"/>
    <property type="match status" value="1"/>
</dbReference>
<dbReference type="SUPFAM" id="SSF47336">
    <property type="entry name" value="ACP-like"/>
    <property type="match status" value="1"/>
</dbReference>
<dbReference type="PROSITE" id="PS50075">
    <property type="entry name" value="CARRIER"/>
    <property type="match status" value="1"/>
</dbReference>
<name>ACP_TREPS</name>
<proteinExistence type="inferred from homology"/>
<keyword id="KW-0963">Cytoplasm</keyword>
<keyword id="KW-0275">Fatty acid biosynthesis</keyword>
<keyword id="KW-0276">Fatty acid metabolism</keyword>
<keyword id="KW-0444">Lipid biosynthesis</keyword>
<keyword id="KW-0443">Lipid metabolism</keyword>
<keyword id="KW-0596">Phosphopantetheine</keyword>
<keyword id="KW-0597">Phosphoprotein</keyword>
<feature type="chain" id="PRO_1000139072" description="Acyl carrier protein">
    <location>
        <begin position="1"/>
        <end position="78"/>
    </location>
</feature>
<feature type="domain" description="Carrier" evidence="2">
    <location>
        <begin position="2"/>
        <end position="77"/>
    </location>
</feature>
<feature type="modified residue" description="O-(pantetheine 4'-phosphoryl)serine" evidence="2">
    <location>
        <position position="37"/>
    </location>
</feature>